<name>CLPP3_PARMW</name>
<dbReference type="EC" id="3.4.21.92" evidence="1"/>
<dbReference type="EMBL" id="BX569693">
    <property type="protein sequence ID" value="CAE08164.1"/>
    <property type="molecule type" value="Genomic_DNA"/>
</dbReference>
<dbReference type="RefSeq" id="WP_011128513.1">
    <property type="nucleotide sequence ID" value="NC_005070.1"/>
</dbReference>
<dbReference type="SMR" id="Q7U5Q2"/>
<dbReference type="STRING" id="84588.SYNW1649"/>
<dbReference type="MEROPS" id="S14.001"/>
<dbReference type="KEGG" id="syw:SYNW1649"/>
<dbReference type="eggNOG" id="COG0740">
    <property type="taxonomic scope" value="Bacteria"/>
</dbReference>
<dbReference type="HOGENOM" id="CLU_058707_3_2_3"/>
<dbReference type="Proteomes" id="UP000001422">
    <property type="component" value="Chromosome"/>
</dbReference>
<dbReference type="GO" id="GO:0005737">
    <property type="term" value="C:cytoplasm"/>
    <property type="evidence" value="ECO:0007669"/>
    <property type="project" value="UniProtKB-SubCell"/>
</dbReference>
<dbReference type="GO" id="GO:0009368">
    <property type="term" value="C:endopeptidase Clp complex"/>
    <property type="evidence" value="ECO:0007669"/>
    <property type="project" value="TreeGrafter"/>
</dbReference>
<dbReference type="GO" id="GO:0004176">
    <property type="term" value="F:ATP-dependent peptidase activity"/>
    <property type="evidence" value="ECO:0007669"/>
    <property type="project" value="InterPro"/>
</dbReference>
<dbReference type="GO" id="GO:0051117">
    <property type="term" value="F:ATPase binding"/>
    <property type="evidence" value="ECO:0007669"/>
    <property type="project" value="TreeGrafter"/>
</dbReference>
<dbReference type="GO" id="GO:0004252">
    <property type="term" value="F:serine-type endopeptidase activity"/>
    <property type="evidence" value="ECO:0007669"/>
    <property type="project" value="UniProtKB-UniRule"/>
</dbReference>
<dbReference type="GO" id="GO:0006515">
    <property type="term" value="P:protein quality control for misfolded or incompletely synthesized proteins"/>
    <property type="evidence" value="ECO:0007669"/>
    <property type="project" value="TreeGrafter"/>
</dbReference>
<dbReference type="CDD" id="cd07017">
    <property type="entry name" value="S14_ClpP_2"/>
    <property type="match status" value="1"/>
</dbReference>
<dbReference type="FunFam" id="3.90.226.10:FF:000001">
    <property type="entry name" value="ATP-dependent Clp protease proteolytic subunit"/>
    <property type="match status" value="1"/>
</dbReference>
<dbReference type="Gene3D" id="3.90.226.10">
    <property type="entry name" value="2-enoyl-CoA Hydratase, Chain A, domain 1"/>
    <property type="match status" value="1"/>
</dbReference>
<dbReference type="HAMAP" id="MF_00444">
    <property type="entry name" value="ClpP"/>
    <property type="match status" value="1"/>
</dbReference>
<dbReference type="InterPro" id="IPR001907">
    <property type="entry name" value="ClpP"/>
</dbReference>
<dbReference type="InterPro" id="IPR029045">
    <property type="entry name" value="ClpP/crotonase-like_dom_sf"/>
</dbReference>
<dbReference type="InterPro" id="IPR023562">
    <property type="entry name" value="ClpP/TepA"/>
</dbReference>
<dbReference type="InterPro" id="IPR033135">
    <property type="entry name" value="ClpP_His_AS"/>
</dbReference>
<dbReference type="InterPro" id="IPR018215">
    <property type="entry name" value="ClpP_Ser_AS"/>
</dbReference>
<dbReference type="NCBIfam" id="NF001368">
    <property type="entry name" value="PRK00277.1"/>
    <property type="match status" value="1"/>
</dbReference>
<dbReference type="NCBIfam" id="NF009205">
    <property type="entry name" value="PRK12553.1"/>
    <property type="match status" value="1"/>
</dbReference>
<dbReference type="PANTHER" id="PTHR10381">
    <property type="entry name" value="ATP-DEPENDENT CLP PROTEASE PROTEOLYTIC SUBUNIT"/>
    <property type="match status" value="1"/>
</dbReference>
<dbReference type="PANTHER" id="PTHR10381:SF70">
    <property type="entry name" value="ATP-DEPENDENT CLP PROTEASE PROTEOLYTIC SUBUNIT"/>
    <property type="match status" value="1"/>
</dbReference>
<dbReference type="Pfam" id="PF00574">
    <property type="entry name" value="CLP_protease"/>
    <property type="match status" value="1"/>
</dbReference>
<dbReference type="PRINTS" id="PR00127">
    <property type="entry name" value="CLPPROTEASEP"/>
</dbReference>
<dbReference type="SUPFAM" id="SSF52096">
    <property type="entry name" value="ClpP/crotonase"/>
    <property type="match status" value="1"/>
</dbReference>
<dbReference type="PROSITE" id="PS00382">
    <property type="entry name" value="CLP_PROTEASE_HIS"/>
    <property type="match status" value="1"/>
</dbReference>
<dbReference type="PROSITE" id="PS00381">
    <property type="entry name" value="CLP_PROTEASE_SER"/>
    <property type="match status" value="1"/>
</dbReference>
<keyword id="KW-0963">Cytoplasm</keyword>
<keyword id="KW-0378">Hydrolase</keyword>
<keyword id="KW-0645">Protease</keyword>
<keyword id="KW-0720">Serine protease</keyword>
<protein>
    <recommendedName>
        <fullName evidence="1">ATP-dependent Clp protease proteolytic subunit 3</fullName>
        <ecNumber evidence="1">3.4.21.92</ecNumber>
    </recommendedName>
    <alternativeName>
        <fullName evidence="1">Endopeptidase Clp 3</fullName>
    </alternativeName>
</protein>
<sequence>MPIGTPSVPYRLPGSQMERWVDIYTRLGVERILFLGSEVNDGIANSLVAQMLYLDSEDSSKPIYLYINSPGGSVTAGLAIYDTIQYVKSEVVTICVGLAASMGAFLLAAGTKGKRVALPHSRIMIHQPLGGTSRRQASDIEIEAREILRMKEMLNRSLSDMSGQSFDKIEKDTDRDYFLSAEEAKDYGLIDRVISHPNEA</sequence>
<feature type="chain" id="PRO_0000179693" description="ATP-dependent Clp protease proteolytic subunit 3">
    <location>
        <begin position="1"/>
        <end position="200"/>
    </location>
</feature>
<feature type="active site" description="Nucleophile" evidence="1">
    <location>
        <position position="101"/>
    </location>
</feature>
<feature type="active site" evidence="1">
    <location>
        <position position="126"/>
    </location>
</feature>
<proteinExistence type="inferred from homology"/>
<accession>Q7U5Q2</accession>
<comment type="function">
    <text evidence="1">Cleaves peptides in various proteins in a process that requires ATP hydrolysis. Has a chymotrypsin-like activity. Plays a major role in the degradation of misfolded proteins.</text>
</comment>
<comment type="catalytic activity">
    <reaction evidence="1">
        <text>Hydrolysis of proteins to small peptides in the presence of ATP and magnesium. alpha-casein is the usual test substrate. In the absence of ATP, only oligopeptides shorter than five residues are hydrolyzed (such as succinyl-Leu-Tyr-|-NHMec, and Leu-Tyr-Leu-|-Tyr-Trp, in which cleavage of the -Tyr-|-Leu- and -Tyr-|-Trp bonds also occurs).</text>
        <dbReference type="EC" id="3.4.21.92"/>
    </reaction>
</comment>
<comment type="subunit">
    <text evidence="1">Fourteen ClpP subunits assemble into 2 heptameric rings which stack back to back to give a disk-like structure with a central cavity, resembling the structure of eukaryotic proteasomes.</text>
</comment>
<comment type="subcellular location">
    <subcellularLocation>
        <location evidence="1">Cytoplasm</location>
    </subcellularLocation>
</comment>
<comment type="similarity">
    <text evidence="1">Belongs to the peptidase S14 family.</text>
</comment>
<evidence type="ECO:0000255" key="1">
    <source>
        <dbReference type="HAMAP-Rule" id="MF_00444"/>
    </source>
</evidence>
<reference key="1">
    <citation type="journal article" date="2003" name="Nature">
        <title>The genome of a motile marine Synechococcus.</title>
        <authorList>
            <person name="Palenik B."/>
            <person name="Brahamsha B."/>
            <person name="Larimer F.W."/>
            <person name="Land M.L."/>
            <person name="Hauser L."/>
            <person name="Chain P."/>
            <person name="Lamerdin J.E."/>
            <person name="Regala W."/>
            <person name="Allen E.E."/>
            <person name="McCarren J."/>
            <person name="Paulsen I.T."/>
            <person name="Dufresne A."/>
            <person name="Partensky F."/>
            <person name="Webb E.A."/>
            <person name="Waterbury J."/>
        </authorList>
    </citation>
    <scope>NUCLEOTIDE SEQUENCE [LARGE SCALE GENOMIC DNA]</scope>
    <source>
        <strain>WH8102</strain>
    </source>
</reference>
<organism>
    <name type="scientific">Parasynechococcus marenigrum (strain WH8102)</name>
    <dbReference type="NCBI Taxonomy" id="84588"/>
    <lineage>
        <taxon>Bacteria</taxon>
        <taxon>Bacillati</taxon>
        <taxon>Cyanobacteriota</taxon>
        <taxon>Cyanophyceae</taxon>
        <taxon>Synechococcales</taxon>
        <taxon>Prochlorococcaceae</taxon>
        <taxon>Parasynechococcus</taxon>
        <taxon>Parasynechococcus marenigrum</taxon>
    </lineage>
</organism>
<gene>
    <name evidence="1" type="primary">clpP3</name>
    <name type="ordered locus">SYNW1649</name>
</gene>